<reference key="1">
    <citation type="submission" date="2007-09" db="EMBL/GenBank/DDBJ databases">
        <title>Complete genome sequence of Rickettsia akari.</title>
        <authorList>
            <person name="Madan A."/>
            <person name="Fahey J."/>
            <person name="Helton E."/>
            <person name="Ketteman M."/>
            <person name="Madan A."/>
            <person name="Rodrigues S."/>
            <person name="Sanchez A."/>
            <person name="Whiting M."/>
            <person name="Dasch G."/>
            <person name="Eremeeva M."/>
        </authorList>
    </citation>
    <scope>NUCLEOTIDE SEQUENCE [LARGE SCALE GENOMIC DNA]</scope>
    <source>
        <strain>Hartford</strain>
    </source>
</reference>
<comment type="similarity">
    <text evidence="1">Belongs to the dGTPase family. Type 2 subfamily.</text>
</comment>
<accession>A8GM08</accession>
<protein>
    <recommendedName>
        <fullName evidence="1">Deoxyguanosinetriphosphate triphosphohydrolase-like protein</fullName>
    </recommendedName>
</protein>
<evidence type="ECO:0000255" key="1">
    <source>
        <dbReference type="HAMAP-Rule" id="MF_01212"/>
    </source>
</evidence>
<evidence type="ECO:0000255" key="2">
    <source>
        <dbReference type="PROSITE-ProRule" id="PRU01175"/>
    </source>
</evidence>
<keyword id="KW-0378">Hydrolase</keyword>
<gene>
    <name type="ordered locus">A1C_00500</name>
</gene>
<proteinExistence type="inferred from homology"/>
<name>DGTL1_RICAH</name>
<dbReference type="EMBL" id="CP000847">
    <property type="protein sequence ID" value="ABV74433.1"/>
    <property type="molecule type" value="Genomic_DNA"/>
</dbReference>
<dbReference type="RefSeq" id="WP_012013303.1">
    <property type="nucleotide sequence ID" value="NC_009881.1"/>
</dbReference>
<dbReference type="SMR" id="A8GM08"/>
<dbReference type="STRING" id="293614.A1C_00500"/>
<dbReference type="KEGG" id="rak:A1C_00500"/>
<dbReference type="eggNOG" id="COG0232">
    <property type="taxonomic scope" value="Bacteria"/>
</dbReference>
<dbReference type="HOGENOM" id="CLU_028163_1_0_5"/>
<dbReference type="Proteomes" id="UP000006830">
    <property type="component" value="Chromosome"/>
</dbReference>
<dbReference type="GO" id="GO:0008832">
    <property type="term" value="F:dGTPase activity"/>
    <property type="evidence" value="ECO:0007669"/>
    <property type="project" value="TreeGrafter"/>
</dbReference>
<dbReference type="GO" id="GO:0006203">
    <property type="term" value="P:dGTP catabolic process"/>
    <property type="evidence" value="ECO:0007669"/>
    <property type="project" value="TreeGrafter"/>
</dbReference>
<dbReference type="CDD" id="cd00077">
    <property type="entry name" value="HDc"/>
    <property type="match status" value="1"/>
</dbReference>
<dbReference type="Gene3D" id="1.10.3210.10">
    <property type="entry name" value="Hypothetical protein af1432"/>
    <property type="match status" value="1"/>
</dbReference>
<dbReference type="HAMAP" id="MF_01212">
    <property type="entry name" value="dGTPase_type2"/>
    <property type="match status" value="1"/>
</dbReference>
<dbReference type="InterPro" id="IPR006261">
    <property type="entry name" value="dGTPase"/>
</dbReference>
<dbReference type="InterPro" id="IPR050135">
    <property type="entry name" value="dGTPase-like"/>
</dbReference>
<dbReference type="InterPro" id="IPR023023">
    <property type="entry name" value="dNTPase_2"/>
</dbReference>
<dbReference type="InterPro" id="IPR003607">
    <property type="entry name" value="HD/PDEase_dom"/>
</dbReference>
<dbReference type="InterPro" id="IPR006674">
    <property type="entry name" value="HD_domain"/>
</dbReference>
<dbReference type="InterPro" id="IPR026875">
    <property type="entry name" value="PHydrolase_assoc_dom"/>
</dbReference>
<dbReference type="NCBIfam" id="TIGR01353">
    <property type="entry name" value="dGTP_triPase"/>
    <property type="match status" value="1"/>
</dbReference>
<dbReference type="NCBIfam" id="NF002326">
    <property type="entry name" value="PRK01286.1-1"/>
    <property type="match status" value="1"/>
</dbReference>
<dbReference type="NCBIfam" id="NF002330">
    <property type="entry name" value="PRK01286.1-5"/>
    <property type="match status" value="1"/>
</dbReference>
<dbReference type="PANTHER" id="PTHR11373:SF43">
    <property type="entry name" value="DEOXYGUANOSINETRIPHOSPHATE TRIPHOSPHOHYDROLASE-LIKE PROTEIN"/>
    <property type="match status" value="1"/>
</dbReference>
<dbReference type="PANTHER" id="PTHR11373">
    <property type="entry name" value="DEOXYNUCLEOSIDE TRIPHOSPHATE TRIPHOSPHOHYDROLASE"/>
    <property type="match status" value="1"/>
</dbReference>
<dbReference type="Pfam" id="PF01966">
    <property type="entry name" value="HD"/>
    <property type="match status" value="1"/>
</dbReference>
<dbReference type="Pfam" id="PF13286">
    <property type="entry name" value="HD_assoc"/>
    <property type="match status" value="1"/>
</dbReference>
<dbReference type="SMART" id="SM00471">
    <property type="entry name" value="HDc"/>
    <property type="match status" value="1"/>
</dbReference>
<dbReference type="SUPFAM" id="SSF109604">
    <property type="entry name" value="HD-domain/PDEase-like"/>
    <property type="match status" value="1"/>
</dbReference>
<dbReference type="PROSITE" id="PS51831">
    <property type="entry name" value="HD"/>
    <property type="match status" value="1"/>
</dbReference>
<sequence>MLASYASDPLKSRGRLYKEIPTSYRNEFECDRDRIINTNAFRRLQYKTQVFINHEGDHYRNRLTHSLEVSTVARSVANTLNLSSDLAETIALAHDLGHTPFGHAGERALNECMKEYSGFSHNAQSLKILTLLEKRYAAYNGVNLTWEVLEGIIKHNGPITGEINEYIAEYNKQNDLELSTYASAEAQIASLADDISYISHDLEDSIGAKIIDFNSLAELKYIDQHVFELKSKFKNISSSCLIYEVVRKLMHELITDLLWQTKENLNKEKIINIYEIRHLNYQIVDFTEKTNDRIKETKKFLHERVYKSNKITAISLKCTKIVQGLFKVYMDDINLLPVNWKMLIDSDDTYSKARVIADYIAGMTDRFAIQEYNQLCSLNFNNILKLNYEYI</sequence>
<feature type="chain" id="PRO_1000066437" description="Deoxyguanosinetriphosphate triphosphohydrolase-like protein">
    <location>
        <begin position="1"/>
        <end position="391"/>
    </location>
</feature>
<feature type="domain" description="HD" evidence="2">
    <location>
        <begin position="62"/>
        <end position="198"/>
    </location>
</feature>
<organism>
    <name type="scientific">Rickettsia akari (strain Hartford)</name>
    <dbReference type="NCBI Taxonomy" id="293614"/>
    <lineage>
        <taxon>Bacteria</taxon>
        <taxon>Pseudomonadati</taxon>
        <taxon>Pseudomonadota</taxon>
        <taxon>Alphaproteobacteria</taxon>
        <taxon>Rickettsiales</taxon>
        <taxon>Rickettsiaceae</taxon>
        <taxon>Rickettsieae</taxon>
        <taxon>Rickettsia</taxon>
        <taxon>spotted fever group</taxon>
    </lineage>
</organism>